<comment type="function">
    <text evidence="4 5">Snake venom phospholipase A2 (PLA2) that shows anticoagulant activities, strong myolytic activity, infiltration of polymorphonuclear cells, and edema in stromal tissues. Induces cell death of Jurkat cells in a concentration-dependent manner. Shows a low phospholipase A2 activity. PLA2 catalyzes the calcium-dependent hydrolysis of the 2-acyl groups in 3-sn-phosphoglycerides.</text>
</comment>
<comment type="catalytic activity">
    <reaction evidence="2 3">
        <text>a 1,2-diacyl-sn-glycero-3-phosphocholine + H2O = a 1-acyl-sn-glycero-3-phosphocholine + a fatty acid + H(+)</text>
        <dbReference type="Rhea" id="RHEA:15801"/>
        <dbReference type="ChEBI" id="CHEBI:15377"/>
        <dbReference type="ChEBI" id="CHEBI:15378"/>
        <dbReference type="ChEBI" id="CHEBI:28868"/>
        <dbReference type="ChEBI" id="CHEBI:57643"/>
        <dbReference type="ChEBI" id="CHEBI:58168"/>
        <dbReference type="EC" id="3.1.1.4"/>
    </reaction>
</comment>
<comment type="cofactor">
    <cofactor evidence="5">
        <name>Ca(2+)</name>
        <dbReference type="ChEBI" id="CHEBI:29108"/>
    </cofactor>
    <text evidence="5">Binds 1 Ca(2+) ion.</text>
</comment>
<comment type="subunit">
    <text evidence="6">Exists as a monomer in both solution and crystal states (PubMed:30787342). In the presence of SDS or probably in the presence of phospholipids, assembles to form SDS-resistant stable oligomers (PubMed:30787342).</text>
</comment>
<comment type="subcellular location">
    <subcellularLocation>
        <location evidence="5">Secreted</location>
    </subcellularLocation>
</comment>
<comment type="tissue specificity">
    <text evidence="13">Expressed by the venom gland.</text>
</comment>
<comment type="mass spectrometry" mass="13753.0" method="Electrospray" evidence="6"/>
<comment type="miscellaneous">
    <text>Is abundantly expressed in Tokunoshima and Amami-Oshima P.flavoviridis venom, but is missing in Okinawa P.flavoviridis venom. It is thought that loss of BP-II in Okinawa P.flavoviridis is due to lack of necessity for a strong toxicity exerted by BP-II in the venom as far as they feed mostly on frogs.</text>
</comment>
<comment type="similarity">
    <text evidence="12">Belongs to the phospholipase A2 family. Group II subfamily. K49 sub-subfamily.</text>
</comment>
<comment type="caution">
    <text evidence="13">Binds calcium very weakly as one of the calcium-binding ligands is lost (Asp-&gt;Lys in position 64, which corresponds to 'Lys-49' in the current nomenclature).</text>
</comment>
<sequence length="138" mass="15522">MRTLWIMAVLLVGVDGSLVQLWKMIFQETGKEAAKNYGLYGCNCGVGRRGKPKDATDSCCYVHKCCYKKVTGCNPKMDSYSYSWKNKAIVCGEKNPPCLKQVCECDKAVAICLRENLGTYNKKYTIYPKPFCKKADTC</sequence>
<evidence type="ECO:0000250" key="1"/>
<evidence type="ECO:0000255" key="2">
    <source>
        <dbReference type="PROSITE-ProRule" id="PRU10035"/>
    </source>
</evidence>
<evidence type="ECO:0000255" key="3">
    <source>
        <dbReference type="PROSITE-ProRule" id="PRU10036"/>
    </source>
</evidence>
<evidence type="ECO:0000269" key="4">
    <source>
    </source>
</evidence>
<evidence type="ECO:0000269" key="5">
    <source>
    </source>
</evidence>
<evidence type="ECO:0000269" key="6">
    <source>
    </source>
</evidence>
<evidence type="ECO:0000303" key="7">
    <source>
    </source>
</evidence>
<evidence type="ECO:0000303" key="8">
    <source>
    </source>
</evidence>
<evidence type="ECO:0000303" key="9">
    <source>
    </source>
</evidence>
<evidence type="ECO:0000303" key="10">
    <source>
    </source>
</evidence>
<evidence type="ECO:0000303" key="11">
    <source>
    </source>
</evidence>
<evidence type="ECO:0000305" key="12"/>
<evidence type="ECO:0000305" key="13">
    <source>
    </source>
</evidence>
<evidence type="ECO:0007744" key="14">
    <source>
        <dbReference type="PDB" id="6AL3"/>
    </source>
</evidence>
<evidence type="ECO:0007829" key="15">
    <source>
        <dbReference type="PDB" id="6AL3"/>
    </source>
</evidence>
<protein>
    <recommendedName>
        <fullName>Basic phospholipase A2 BP-II</fullName>
        <shortName>svPLA2</shortName>
        <ecNumber>3.1.1.4</ecNumber>
    </recommendedName>
    <alternativeName>
        <fullName evidence="7 8 9 10 11">Basic protein II</fullName>
        <shortName evidence="7">BP2</shortName>
        <shortName evidence="9 10 11">BPII</shortName>
    </alternativeName>
    <alternativeName>
        <fullName evidence="9">PflLys49-PLA2 BPII</fullName>
    </alternativeName>
    <alternativeName>
        <fullName>Phosphatidylcholine 2-acylhydrolase</fullName>
    </alternativeName>
</protein>
<keyword id="KW-0002">3D-structure</keyword>
<keyword id="KW-1203">Blood coagulation cascade inhibiting toxin</keyword>
<keyword id="KW-0903">Direct protein sequencing</keyword>
<keyword id="KW-1015">Disulfide bond</keyword>
<keyword id="KW-1199">Hemostasis impairing toxin</keyword>
<keyword id="KW-0378">Hydrolase</keyword>
<keyword id="KW-0479">Metal-binding</keyword>
<keyword id="KW-0959">Myotoxin</keyword>
<keyword id="KW-0964">Secreted</keyword>
<keyword id="KW-0732">Signal</keyword>
<keyword id="KW-0800">Toxin</keyword>
<organism>
    <name type="scientific">Protobothrops flavoviridis</name>
    <name type="common">Habu</name>
    <name type="synonym">Trimeresurus flavoviridis</name>
    <dbReference type="NCBI Taxonomy" id="88087"/>
    <lineage>
        <taxon>Eukaryota</taxon>
        <taxon>Metazoa</taxon>
        <taxon>Chordata</taxon>
        <taxon>Craniata</taxon>
        <taxon>Vertebrata</taxon>
        <taxon>Euteleostomi</taxon>
        <taxon>Lepidosauria</taxon>
        <taxon>Squamata</taxon>
        <taxon>Bifurcata</taxon>
        <taxon>Unidentata</taxon>
        <taxon>Episquamata</taxon>
        <taxon>Toxicofera</taxon>
        <taxon>Serpentes</taxon>
        <taxon>Colubroidea</taxon>
        <taxon>Viperidae</taxon>
        <taxon>Crotalinae</taxon>
        <taxon>Protobothrops</taxon>
    </lineage>
</organism>
<reference key="1">
    <citation type="journal article" date="1992" name="Proc. Natl. Acad. Sci. U.S.A.">
        <title>Unusually high conservation of untranslated sequences in cDNAs for Trimeresurus flavoviridis phospholipase A2 isozymes.</title>
        <authorList>
            <person name="Ogawa T."/>
            <person name="Oda N."/>
            <person name="Nakashima K."/>
            <person name="Sasaki H."/>
            <person name="Hattori M."/>
            <person name="Sakaki Y."/>
            <person name="Kihara H."/>
            <person name="Ohno M."/>
        </authorList>
    </citation>
    <scope>NUCLEOTIDE SEQUENCE [MRNA]</scope>
    <source>
        <strain>Tokunoshima</strain>
        <tissue>Venom gland</tissue>
    </source>
</reference>
<reference key="2">
    <citation type="journal article" date="1993" name="Proc. Natl. Acad. Sci. U.S.A.">
        <title>Accelerated evolution of Trimeresurus flavoviridis venom gland phospholipase A2 isozymes.</title>
        <authorList>
            <person name="Nakashima K."/>
            <person name="Ogawa T."/>
            <person name="Oda N."/>
            <person name="Hattori M."/>
            <person name="Sakaki Y."/>
            <person name="Kihara H."/>
            <person name="Ohno M."/>
        </authorList>
    </citation>
    <scope>NUCLEOTIDE SEQUENCE [GENOMIC DNA]</scope>
    <source>
        <strain>Tokunoshima</strain>
        <tissue>Liver</tissue>
    </source>
</reference>
<reference key="3">
    <citation type="journal article" date="1995" name="Proc. Natl. Acad. Sci. U.S.A.">
        <title>Accelerated evolution in the protein-coding regions is universal in crotalinae snake venom gland phospholipase A2 isozyme genes.</title>
        <authorList>
            <person name="Nakashima K."/>
            <person name="Nobuhisa I."/>
            <person name="Deshimaru M."/>
            <person name="Nakai M."/>
            <person name="Ogawa T."/>
            <person name="Shimohigashi Y."/>
            <person name="Fukumaki Y."/>
            <person name="Hattori M."/>
            <person name="Sakaki Y."/>
            <person name="Hattori S."/>
            <person name="Ohno M."/>
        </authorList>
    </citation>
    <scope>NUCLEOTIDE SEQUENCE [GENOMIC DNA]</scope>
    <source>
        <tissue>Liver</tissue>
    </source>
</reference>
<reference key="4">
    <citation type="journal article" date="2010" name="Gene">
        <title>Unique structural characteristics and evolution of a cluster of venom phospholipase A2 isozyme genes of Protobothrops flavoviridis snake.</title>
        <authorList>
            <person name="Ikeda N."/>
            <person name="Chijiwa T."/>
            <person name="Matsubara K."/>
            <person name="Oda-Ueda N."/>
            <person name="Hattori S."/>
            <person name="Matsuda Y."/>
            <person name="Ohno M."/>
        </authorList>
    </citation>
    <scope>NUCLEOTIDE SEQUENCE [GENOMIC DNA]</scope>
    <source>
        <strain>Amami-Oshima</strain>
        <tissue>Liver</tissue>
    </source>
</reference>
<reference key="5">
    <citation type="journal article" date="1990" name="J. Biochem.">
        <title>Purification and amino acid sequence of basic protein II, a lysine-49-phospholipase A2 with low activity, from Trimeresurus flavoviridis venom.</title>
        <authorList>
            <person name="Liu S.-Y."/>
            <person name="Yoshizumi K."/>
            <person name="Oda N."/>
            <person name="Ohno M."/>
            <person name="Tokunaga F."/>
            <person name="Iwanaga S."/>
            <person name="Kihara H."/>
        </authorList>
    </citation>
    <scope>PROTEIN SEQUENCE OF 17-138</scope>
    <scope>FUNCTION</scope>
    <scope>COFACTOR</scope>
    <scope>SUBCELLULAR LOCATION</scope>
    <source>
        <tissue>Venom</tissue>
    </source>
</reference>
<reference key="6">
    <citation type="journal article" date="2009" name="Toxicon">
        <title>Island specific expression of a novel [Lys(49)]phospholipase A(2) (BPIII) in Protobothrops flavoviridis venom in Amami-Oshima, Japan.</title>
        <authorList>
            <person name="Murakami T."/>
            <person name="Kariu T."/>
            <person name="Takazaki S."/>
            <person name="Hattori S."/>
            <person name="Chijiwa T."/>
            <person name="Ohno M."/>
            <person name="Oda-Ueda N."/>
        </authorList>
    </citation>
    <scope>FUNCTION</scope>
    <scope>IDENTIFICATION BY MASS SPECTROMETRY</scope>
    <source>
        <strain>Amami-Oshima</strain>
        <strain>Tokunoshima</strain>
        <tissue>Venom</tissue>
    </source>
</reference>
<reference key="7">
    <citation type="journal article" date="2010" name="Toxicon">
        <authorList>
            <person name="Murakami T."/>
            <person name="Kariu T."/>
            <person name="Takazaki S."/>
            <person name="Hattori S."/>
            <person name="Chijiwa T."/>
            <person name="Ohno M."/>
            <person name="Oda-Ueda N."/>
        </authorList>
    </citation>
    <scope>ERRATUM OF PUBMED:19463843</scope>
</reference>
<reference key="8">
    <citation type="journal article" date="2019" name="Sci. Rep.">
        <title>SDS-induced oligomerization of Lys49-phospholipase A2 from snake venom.</title>
        <authorList>
            <person name="Matsui T."/>
            <person name="Kamata S."/>
            <person name="Ishii K."/>
            <person name="Maruno T."/>
            <person name="Ghanem N."/>
            <person name="Uchiyama S."/>
            <person name="Kato K."/>
            <person name="Suzuki A."/>
            <person name="Oda-Ueda N."/>
            <person name="Ogawa T."/>
            <person name="Tanaka Y."/>
        </authorList>
    </citation>
    <scope>X-RAY CRYSTALLOGRAPHY (2.57 ANGSTROMS) OF 17-138</scope>
    <scope>DISULFIDE BOND</scope>
    <scope>MASS SPECTROMETRY</scope>
    <scope>SUBUNIT</scope>
    <source>
        <strain>Amami-Oshima</strain>
    </source>
</reference>
<dbReference type="EC" id="3.1.1.4"/>
<dbReference type="EMBL" id="D10719">
    <property type="protein sequence ID" value="BAA01562.1"/>
    <property type="molecule type" value="mRNA"/>
</dbReference>
<dbReference type="EMBL" id="D13384">
    <property type="protein sequence ID" value="BAA02652.1"/>
    <property type="molecule type" value="Genomic_DNA"/>
</dbReference>
<dbReference type="EMBL" id="AB440236">
    <property type="protein sequence ID" value="BAG82668.1"/>
    <property type="molecule type" value="Genomic_DNA"/>
</dbReference>
<dbReference type="PIR" id="E48188">
    <property type="entry name" value="E48188"/>
</dbReference>
<dbReference type="PDB" id="6AL3">
    <property type="method" value="X-ray"/>
    <property type="resolution" value="2.57 A"/>
    <property type="chains" value="A/B/C/D=17-138"/>
</dbReference>
<dbReference type="PDBsum" id="6AL3"/>
<dbReference type="SMR" id="P0DJJ9"/>
<dbReference type="GO" id="GO:0005576">
    <property type="term" value="C:extracellular region"/>
    <property type="evidence" value="ECO:0007669"/>
    <property type="project" value="UniProtKB-SubCell"/>
</dbReference>
<dbReference type="GO" id="GO:0005509">
    <property type="term" value="F:calcium ion binding"/>
    <property type="evidence" value="ECO:0007669"/>
    <property type="project" value="InterPro"/>
</dbReference>
<dbReference type="GO" id="GO:0047498">
    <property type="term" value="F:calcium-dependent phospholipase A2 activity"/>
    <property type="evidence" value="ECO:0007669"/>
    <property type="project" value="TreeGrafter"/>
</dbReference>
<dbReference type="GO" id="GO:0005543">
    <property type="term" value="F:phospholipid binding"/>
    <property type="evidence" value="ECO:0007669"/>
    <property type="project" value="TreeGrafter"/>
</dbReference>
<dbReference type="GO" id="GO:0090729">
    <property type="term" value="F:toxin activity"/>
    <property type="evidence" value="ECO:0007669"/>
    <property type="project" value="UniProtKB-KW"/>
</dbReference>
<dbReference type="GO" id="GO:0050482">
    <property type="term" value="P:arachidonate secretion"/>
    <property type="evidence" value="ECO:0007669"/>
    <property type="project" value="InterPro"/>
</dbReference>
<dbReference type="GO" id="GO:0016042">
    <property type="term" value="P:lipid catabolic process"/>
    <property type="evidence" value="ECO:0007669"/>
    <property type="project" value="InterPro"/>
</dbReference>
<dbReference type="GO" id="GO:0042130">
    <property type="term" value="P:negative regulation of T cell proliferation"/>
    <property type="evidence" value="ECO:0007669"/>
    <property type="project" value="TreeGrafter"/>
</dbReference>
<dbReference type="GO" id="GO:0006644">
    <property type="term" value="P:phospholipid metabolic process"/>
    <property type="evidence" value="ECO:0007669"/>
    <property type="project" value="InterPro"/>
</dbReference>
<dbReference type="CDD" id="cd00125">
    <property type="entry name" value="PLA2c"/>
    <property type="match status" value="1"/>
</dbReference>
<dbReference type="FunFam" id="1.20.90.10:FF:000001">
    <property type="entry name" value="Basic phospholipase A2 homolog"/>
    <property type="match status" value="1"/>
</dbReference>
<dbReference type="Gene3D" id="1.20.90.10">
    <property type="entry name" value="Phospholipase A2 domain"/>
    <property type="match status" value="1"/>
</dbReference>
<dbReference type="InterPro" id="IPR001211">
    <property type="entry name" value="PLipase_A2"/>
</dbReference>
<dbReference type="InterPro" id="IPR033112">
    <property type="entry name" value="PLipase_A2_Asp_AS"/>
</dbReference>
<dbReference type="InterPro" id="IPR016090">
    <property type="entry name" value="PLipase_A2_dom"/>
</dbReference>
<dbReference type="InterPro" id="IPR036444">
    <property type="entry name" value="PLipase_A2_dom_sf"/>
</dbReference>
<dbReference type="InterPro" id="IPR033113">
    <property type="entry name" value="PLipase_A2_His_AS"/>
</dbReference>
<dbReference type="PANTHER" id="PTHR11716">
    <property type="entry name" value="PHOSPHOLIPASE A2 FAMILY MEMBER"/>
    <property type="match status" value="1"/>
</dbReference>
<dbReference type="PANTHER" id="PTHR11716:SF9">
    <property type="entry name" value="PHOSPHOLIPASE A2, MEMBRANE ASSOCIATED"/>
    <property type="match status" value="1"/>
</dbReference>
<dbReference type="Pfam" id="PF00068">
    <property type="entry name" value="Phospholip_A2_1"/>
    <property type="match status" value="1"/>
</dbReference>
<dbReference type="PRINTS" id="PR00389">
    <property type="entry name" value="PHPHLIPASEA2"/>
</dbReference>
<dbReference type="SMART" id="SM00085">
    <property type="entry name" value="PA2c"/>
    <property type="match status" value="1"/>
</dbReference>
<dbReference type="SUPFAM" id="SSF48619">
    <property type="entry name" value="Phospholipase A2, PLA2"/>
    <property type="match status" value="1"/>
</dbReference>
<dbReference type="PROSITE" id="PS00119">
    <property type="entry name" value="PA2_ASP"/>
    <property type="match status" value="1"/>
</dbReference>
<dbReference type="PROSITE" id="PS00118">
    <property type="entry name" value="PA2_HIS"/>
    <property type="match status" value="1"/>
</dbReference>
<proteinExistence type="evidence at protein level"/>
<name>PA2B2_PROFL</name>
<feature type="signal peptide" evidence="5">
    <location>
        <begin position="1"/>
        <end position="16"/>
    </location>
</feature>
<feature type="chain" id="PRO_0000419282" description="Basic phospholipase A2 BP-II" evidence="5">
    <location>
        <begin position="17"/>
        <end position="138"/>
    </location>
</feature>
<feature type="active site" evidence="1">
    <location>
        <position position="63"/>
    </location>
</feature>
<feature type="active site" evidence="1">
    <location>
        <position position="106"/>
    </location>
</feature>
<feature type="binding site" evidence="1">
    <location>
        <position position="45"/>
    </location>
    <ligand>
        <name>Ca(2+)</name>
        <dbReference type="ChEBI" id="CHEBI:29108"/>
    </ligand>
</feature>
<feature type="binding site" evidence="1">
    <location>
        <position position="47"/>
    </location>
    <ligand>
        <name>Ca(2+)</name>
        <dbReference type="ChEBI" id="CHEBI:29108"/>
    </ligand>
</feature>
<feature type="disulfide bond" evidence="6 14">
    <location>
        <begin position="42"/>
        <end position="132"/>
    </location>
</feature>
<feature type="disulfide bond" evidence="6 14">
    <location>
        <begin position="44"/>
        <end position="60"/>
    </location>
</feature>
<feature type="disulfide bond" evidence="6 14">
    <location>
        <begin position="59"/>
        <end position="112"/>
    </location>
</feature>
<feature type="disulfide bond" evidence="6 14">
    <location>
        <begin position="65"/>
        <end position="138"/>
    </location>
</feature>
<feature type="disulfide bond" evidence="6 14">
    <location>
        <begin position="66"/>
        <end position="105"/>
    </location>
</feature>
<feature type="disulfide bond" evidence="6 14">
    <location>
        <begin position="73"/>
        <end position="98"/>
    </location>
</feature>
<feature type="disulfide bond" evidence="6 14">
    <location>
        <begin position="91"/>
        <end position="103"/>
    </location>
</feature>
<feature type="helix" evidence="15">
    <location>
        <begin position="18"/>
        <end position="29"/>
    </location>
</feature>
<feature type="helix" evidence="15">
    <location>
        <begin position="33"/>
        <end position="37"/>
    </location>
</feature>
<feature type="turn" evidence="15">
    <location>
        <begin position="41"/>
        <end position="43"/>
    </location>
</feature>
<feature type="strand" evidence="15">
    <location>
        <begin position="44"/>
        <end position="47"/>
    </location>
</feature>
<feature type="helix" evidence="15">
    <location>
        <begin position="55"/>
        <end position="67"/>
    </location>
</feature>
<feature type="turn" evidence="15">
    <location>
        <begin position="75"/>
        <end position="77"/>
    </location>
</feature>
<feature type="strand" evidence="15">
    <location>
        <begin position="86"/>
        <end position="90"/>
    </location>
</feature>
<feature type="helix" evidence="15">
    <location>
        <begin position="97"/>
        <end position="115"/>
    </location>
</feature>
<feature type="helix" evidence="15">
    <location>
        <begin position="117"/>
        <end position="119"/>
    </location>
</feature>
<feature type="strand" evidence="15">
    <location>
        <begin position="122"/>
        <end position="126"/>
    </location>
</feature>
<feature type="helix" evidence="15">
    <location>
        <begin position="129"/>
        <end position="131"/>
    </location>
</feature>
<accession>P0DJJ9</accession>
<accession>B6F140</accession>
<accession>P20381</accession>